<feature type="chain" id="PRO_0000411836" description="Probable Xaa-Pro aminopeptidase MGG_05684">
    <location>
        <begin position="1"/>
        <end position="526"/>
    </location>
</feature>
<feature type="binding site" evidence="1">
    <location>
        <position position="285"/>
    </location>
    <ligand>
        <name>Mn(2+)</name>
        <dbReference type="ChEBI" id="CHEBI:29035"/>
        <label>2</label>
    </ligand>
</feature>
<feature type="binding site" evidence="1">
    <location>
        <position position="296"/>
    </location>
    <ligand>
        <name>Mn(2+)</name>
        <dbReference type="ChEBI" id="CHEBI:29035"/>
        <label>1</label>
    </ligand>
</feature>
<feature type="binding site" evidence="1">
    <location>
        <position position="296"/>
    </location>
    <ligand>
        <name>Mn(2+)</name>
        <dbReference type="ChEBI" id="CHEBI:29035"/>
        <label>2</label>
    </ligand>
</feature>
<feature type="binding site" evidence="1">
    <location>
        <position position="447"/>
    </location>
    <ligand>
        <name>Mn(2+)</name>
        <dbReference type="ChEBI" id="CHEBI:29035"/>
        <label>1</label>
    </ligand>
</feature>
<feature type="binding site" evidence="1">
    <location>
        <position position="488"/>
    </location>
    <ligand>
        <name>Mn(2+)</name>
        <dbReference type="ChEBI" id="CHEBI:29035"/>
        <label>1</label>
    </ligand>
</feature>
<feature type="binding site" evidence="1">
    <location>
        <position position="488"/>
    </location>
    <ligand>
        <name>Mn(2+)</name>
        <dbReference type="ChEBI" id="CHEBI:29035"/>
        <label>2</label>
    </ligand>
</feature>
<accession>A4RQ11</accession>
<accession>G4MP22</accession>
<reference key="1">
    <citation type="journal article" date="2005" name="Nature">
        <title>The genome sequence of the rice blast fungus Magnaporthe grisea.</title>
        <authorList>
            <person name="Dean R.A."/>
            <person name="Talbot N.J."/>
            <person name="Ebbole D.J."/>
            <person name="Farman M.L."/>
            <person name="Mitchell T.K."/>
            <person name="Orbach M.J."/>
            <person name="Thon M.R."/>
            <person name="Kulkarni R."/>
            <person name="Xu J.-R."/>
            <person name="Pan H."/>
            <person name="Read N.D."/>
            <person name="Lee Y.-H."/>
            <person name="Carbone I."/>
            <person name="Brown D."/>
            <person name="Oh Y.Y."/>
            <person name="Donofrio N."/>
            <person name="Jeong J.S."/>
            <person name="Soanes D.M."/>
            <person name="Djonovic S."/>
            <person name="Kolomiets E."/>
            <person name="Rehmeyer C."/>
            <person name="Li W."/>
            <person name="Harding M."/>
            <person name="Kim S."/>
            <person name="Lebrun M.-H."/>
            <person name="Bohnert H."/>
            <person name="Coughlan S."/>
            <person name="Butler J."/>
            <person name="Calvo S.E."/>
            <person name="Ma L.-J."/>
            <person name="Nicol R."/>
            <person name="Purcell S."/>
            <person name="Nusbaum C."/>
            <person name="Galagan J.E."/>
            <person name="Birren B.W."/>
        </authorList>
    </citation>
    <scope>NUCLEOTIDE SEQUENCE [LARGE SCALE GENOMIC DNA]</scope>
    <source>
        <strain>70-15 / ATCC MYA-4617 / FGSC 8958</strain>
    </source>
</reference>
<dbReference type="EC" id="3.4.11.9"/>
<dbReference type="EMBL" id="CM001231">
    <property type="protein sequence ID" value="EHA57971.1"/>
    <property type="molecule type" value="Genomic_DNA"/>
</dbReference>
<dbReference type="RefSeq" id="XP_003710583.1">
    <property type="nucleotide sequence ID" value="XM_003710535.1"/>
</dbReference>
<dbReference type="SMR" id="A4RQ11"/>
<dbReference type="STRING" id="242507.A4RQ11"/>
<dbReference type="EnsemblFungi" id="MGG_05684T0">
    <property type="protein sequence ID" value="MGG_05684T0"/>
    <property type="gene ID" value="MGG_05684"/>
</dbReference>
<dbReference type="GeneID" id="2675942"/>
<dbReference type="KEGG" id="mgr:MGG_05684"/>
<dbReference type="VEuPathDB" id="FungiDB:MGG_05684"/>
<dbReference type="eggNOG" id="KOG2737">
    <property type="taxonomic scope" value="Eukaryota"/>
</dbReference>
<dbReference type="HOGENOM" id="CLU_017266_1_2_1"/>
<dbReference type="InParanoid" id="A4RQ11"/>
<dbReference type="OMA" id="YELRMIR"/>
<dbReference type="OrthoDB" id="10261878at2759"/>
<dbReference type="Proteomes" id="UP000009058">
    <property type="component" value="Chromosome 1"/>
</dbReference>
<dbReference type="GO" id="GO:0030145">
    <property type="term" value="F:manganese ion binding"/>
    <property type="evidence" value="ECO:0007669"/>
    <property type="project" value="InterPro"/>
</dbReference>
<dbReference type="GO" id="GO:0070006">
    <property type="term" value="F:metalloaminopeptidase activity"/>
    <property type="evidence" value="ECO:0007669"/>
    <property type="project" value="InterPro"/>
</dbReference>
<dbReference type="GO" id="GO:0006508">
    <property type="term" value="P:proteolysis"/>
    <property type="evidence" value="ECO:0007669"/>
    <property type="project" value="UniProtKB-KW"/>
</dbReference>
<dbReference type="CDD" id="cd01087">
    <property type="entry name" value="Prolidase"/>
    <property type="match status" value="1"/>
</dbReference>
<dbReference type="Gene3D" id="3.90.230.10">
    <property type="entry name" value="Creatinase/methionine aminopeptidase superfamily"/>
    <property type="match status" value="1"/>
</dbReference>
<dbReference type="Gene3D" id="3.40.350.10">
    <property type="entry name" value="Creatinase/prolidase N-terminal domain"/>
    <property type="match status" value="1"/>
</dbReference>
<dbReference type="InterPro" id="IPR007865">
    <property type="entry name" value="Aminopep_P_N"/>
</dbReference>
<dbReference type="InterPro" id="IPR029149">
    <property type="entry name" value="Creatin/AminoP/Spt16_N"/>
</dbReference>
<dbReference type="InterPro" id="IPR036005">
    <property type="entry name" value="Creatinase/aminopeptidase-like"/>
</dbReference>
<dbReference type="InterPro" id="IPR000994">
    <property type="entry name" value="Pept_M24"/>
</dbReference>
<dbReference type="InterPro" id="IPR052433">
    <property type="entry name" value="X-Pro_dipept-like"/>
</dbReference>
<dbReference type="PANTHER" id="PTHR43226">
    <property type="entry name" value="XAA-PRO AMINOPEPTIDASE 3"/>
    <property type="match status" value="1"/>
</dbReference>
<dbReference type="PANTHER" id="PTHR43226:SF3">
    <property type="entry name" value="XAA-PRO AMINOPEPTIDASE AN0832-RELATED"/>
    <property type="match status" value="1"/>
</dbReference>
<dbReference type="Pfam" id="PF05195">
    <property type="entry name" value="AMP_N"/>
    <property type="match status" value="1"/>
</dbReference>
<dbReference type="Pfam" id="PF00557">
    <property type="entry name" value="Peptidase_M24"/>
    <property type="match status" value="1"/>
</dbReference>
<dbReference type="SMART" id="SM01011">
    <property type="entry name" value="AMP_N"/>
    <property type="match status" value="1"/>
</dbReference>
<dbReference type="SUPFAM" id="SSF55920">
    <property type="entry name" value="Creatinase/aminopeptidase"/>
    <property type="match status" value="1"/>
</dbReference>
<dbReference type="SUPFAM" id="SSF53092">
    <property type="entry name" value="Creatinase/prolidase N-terminal domain"/>
    <property type="match status" value="1"/>
</dbReference>
<proteinExistence type="inferred from homology"/>
<gene>
    <name type="ORF">MGG_05684</name>
</gene>
<evidence type="ECO:0000250" key="1"/>
<evidence type="ECO:0000305" key="2"/>
<protein>
    <recommendedName>
        <fullName>Probable Xaa-Pro aminopeptidase MGG_05684</fullName>
        <ecNumber>3.4.11.9</ecNumber>
    </recommendedName>
    <alternativeName>
        <fullName>Aminoacylproline aminopeptidase</fullName>
    </alternativeName>
    <alternativeName>
        <fullName>Prolidase</fullName>
    </alternativeName>
</protein>
<organism>
    <name type="scientific">Pyricularia oryzae (strain 70-15 / ATCC MYA-4617 / FGSC 8958)</name>
    <name type="common">Rice blast fungus</name>
    <name type="synonym">Magnaporthe oryzae</name>
    <dbReference type="NCBI Taxonomy" id="242507"/>
    <lineage>
        <taxon>Eukaryota</taxon>
        <taxon>Fungi</taxon>
        <taxon>Dikarya</taxon>
        <taxon>Ascomycota</taxon>
        <taxon>Pezizomycotina</taxon>
        <taxon>Sordariomycetes</taxon>
        <taxon>Sordariomycetidae</taxon>
        <taxon>Magnaporthales</taxon>
        <taxon>Pyriculariaceae</taxon>
        <taxon>Pyricularia</taxon>
    </lineage>
</organism>
<sequence length="526" mass="58488">MGVEHELVVVDEFDALSIELKRPNGSSSSSPSRAVSVEKYPAKTHARKVADKLGVDKGLIYLQGKPTTTYEDSDMEPPFRQRRYFYYMSGADFPNAHLTYDVATDQLLLWIPTRQPREELYLGRIPSREDCMSRLDVDDCRDVVQMTRFIAAHLKHHPGTTLFLLHSDQAPGLDDLPVQYAGRRLDIGRLRLAVDAARVIKTPFEIRQIRRANQVSSEAHRAVLRQIRHLRTEADVEAVFVAACRVRGARSQAYNPIAGAGANAATLHYVDNAAPLKGKQTLVLDAGCEWDCYASDITRTMPAAGRKFSPEAQTIYRIVEKMQNACIDLVRPGVSYLFIQATAQLVAIEEFLKIGLLVGDKAKIAASRVVSAFFPHGLGHHVGLETHDVRSERLLGYDKSSAALWRGKRLVMSVEQCDRVAELMVTARQQGADARDALAEGMVITIEPGIYFNRQYIEAFCSDVPERGSFINKSVLDRYYPVGGVRIEDDILVTADGYENLTTAPKGEEALRIINGDDVEADAVLV</sequence>
<keyword id="KW-0031">Aminopeptidase</keyword>
<keyword id="KW-0378">Hydrolase</keyword>
<keyword id="KW-0464">Manganese</keyword>
<keyword id="KW-0479">Metal-binding</keyword>
<keyword id="KW-0482">Metalloprotease</keyword>
<keyword id="KW-0645">Protease</keyword>
<keyword id="KW-1185">Reference proteome</keyword>
<name>AMPP2_PYRO7</name>
<comment type="function">
    <text evidence="1">Catalyzes the removal of a penultimate prolyl residue from the N-termini of peptides.</text>
</comment>
<comment type="catalytic activity">
    <reaction>
        <text>Release of any N-terminal amino acid, including proline, that is linked to proline, even from a dipeptide or tripeptide.</text>
        <dbReference type="EC" id="3.4.11.9"/>
    </reaction>
</comment>
<comment type="cofactor">
    <cofactor evidence="1">
        <name>Mn(2+)</name>
        <dbReference type="ChEBI" id="CHEBI:29035"/>
    </cofactor>
    <text evidence="1">Binds 2 manganese ions per subunit.</text>
</comment>
<comment type="similarity">
    <text evidence="2">Belongs to the peptidase M24B family.</text>
</comment>